<proteinExistence type="inferred from homology"/>
<dbReference type="EMBL" id="AL445063">
    <property type="protein sequence ID" value="CAC11328.1"/>
    <property type="status" value="ALT_INIT"/>
    <property type="molecule type" value="Genomic_DNA"/>
</dbReference>
<dbReference type="RefSeq" id="WP_048161459.1">
    <property type="nucleotide sequence ID" value="NC_002578.1"/>
</dbReference>
<dbReference type="SMR" id="Q9HLP5"/>
<dbReference type="STRING" id="273075.gene:9571397"/>
<dbReference type="PaxDb" id="273075-Ta0182"/>
<dbReference type="EnsemblBacteria" id="CAC11328">
    <property type="protein sequence ID" value="CAC11328"/>
    <property type="gene ID" value="CAC11328"/>
</dbReference>
<dbReference type="KEGG" id="tac:Ta0182"/>
<dbReference type="eggNOG" id="arCOG02287">
    <property type="taxonomic scope" value="Archaea"/>
</dbReference>
<dbReference type="HOGENOM" id="CLU_117144_1_1_2"/>
<dbReference type="InParanoid" id="Q9HLP5"/>
<dbReference type="OrthoDB" id="59443at2157"/>
<dbReference type="Proteomes" id="UP000001024">
    <property type="component" value="Chromosome"/>
</dbReference>
<dbReference type="Gene3D" id="3.30.110.70">
    <property type="entry name" value="Hypothetical protein apc22750. Chain B"/>
    <property type="match status" value="1"/>
</dbReference>
<dbReference type="HAMAP" id="MF_00338">
    <property type="entry name" value="UPF0145"/>
    <property type="match status" value="1"/>
</dbReference>
<dbReference type="InterPro" id="IPR035439">
    <property type="entry name" value="UPF0145_dom_sf"/>
</dbReference>
<dbReference type="InterPro" id="IPR002765">
    <property type="entry name" value="UPF0145_YbjQ-like"/>
</dbReference>
<dbReference type="PANTHER" id="PTHR34068:SF2">
    <property type="entry name" value="UPF0145 PROTEIN SCO3412"/>
    <property type="match status" value="1"/>
</dbReference>
<dbReference type="PANTHER" id="PTHR34068">
    <property type="entry name" value="UPF0145 PROTEIN YBJQ"/>
    <property type="match status" value="1"/>
</dbReference>
<dbReference type="Pfam" id="PF01906">
    <property type="entry name" value="YbjQ_1"/>
    <property type="match status" value="1"/>
</dbReference>
<dbReference type="SUPFAM" id="SSF117782">
    <property type="entry name" value="YbjQ-like"/>
    <property type="match status" value="1"/>
</dbReference>
<sequence>MSDVIMVNTEYIPGKRIVKVFGTIWGITVRSRGLGGNLVAGLRSLAGGEIKEYTKMLSDARNTAMERLQSAAEQIGANAVINVRFDSSDIGQVMTEIVAYGTAVLVEDVTDNIQRVGLS</sequence>
<evidence type="ECO:0000305" key="1"/>
<comment type="similarity">
    <text evidence="1">Belongs to the UPF0145 family.</text>
</comment>
<comment type="sequence caution" evidence="1">
    <conflict type="erroneous initiation">
        <sequence resource="EMBL-CDS" id="CAC11328"/>
    </conflict>
</comment>
<name>Y182_THEAC</name>
<organism>
    <name type="scientific">Thermoplasma acidophilum (strain ATCC 25905 / DSM 1728 / JCM 9062 / NBRC 15155 / AMRC-C165)</name>
    <dbReference type="NCBI Taxonomy" id="273075"/>
    <lineage>
        <taxon>Archaea</taxon>
        <taxon>Methanobacteriati</taxon>
        <taxon>Thermoplasmatota</taxon>
        <taxon>Thermoplasmata</taxon>
        <taxon>Thermoplasmatales</taxon>
        <taxon>Thermoplasmataceae</taxon>
        <taxon>Thermoplasma</taxon>
    </lineage>
</organism>
<reference key="1">
    <citation type="journal article" date="2000" name="Nature">
        <title>The genome sequence of the thermoacidophilic scavenger Thermoplasma acidophilum.</title>
        <authorList>
            <person name="Ruepp A."/>
            <person name="Graml W."/>
            <person name="Santos-Martinez M.-L."/>
            <person name="Koretke K.K."/>
            <person name="Volker C."/>
            <person name="Mewes H.-W."/>
            <person name="Frishman D."/>
            <person name="Stocker S."/>
            <person name="Lupas A.N."/>
            <person name="Baumeister W."/>
        </authorList>
    </citation>
    <scope>NUCLEOTIDE SEQUENCE [LARGE SCALE GENOMIC DNA]</scope>
    <source>
        <strain>ATCC 25905 / DSM 1728 / JCM 9062 / NBRC 15155 / AMRC-C165</strain>
    </source>
</reference>
<gene>
    <name type="ordered locus">Ta0182</name>
</gene>
<feature type="chain" id="PRO_0000138505" description="UPF0145 protein Ta0182">
    <location>
        <begin position="1"/>
        <end position="119"/>
    </location>
</feature>
<keyword id="KW-1185">Reference proteome</keyword>
<protein>
    <recommendedName>
        <fullName>UPF0145 protein Ta0182</fullName>
    </recommendedName>
</protein>
<accession>Q9HLP5</accession>